<organism>
    <name type="scientific">Drosophila melanogaster</name>
    <name type="common">Fruit fly</name>
    <dbReference type="NCBI Taxonomy" id="7227"/>
    <lineage>
        <taxon>Eukaryota</taxon>
        <taxon>Metazoa</taxon>
        <taxon>Ecdysozoa</taxon>
        <taxon>Arthropoda</taxon>
        <taxon>Hexapoda</taxon>
        <taxon>Insecta</taxon>
        <taxon>Pterygota</taxon>
        <taxon>Neoptera</taxon>
        <taxon>Endopterygota</taxon>
        <taxon>Diptera</taxon>
        <taxon>Brachycera</taxon>
        <taxon>Muscomorpha</taxon>
        <taxon>Ephydroidea</taxon>
        <taxon>Drosophilidae</taxon>
        <taxon>Drosophila</taxon>
        <taxon>Sophophora</taxon>
    </lineage>
</organism>
<evidence type="ECO:0000305" key="1"/>
<comment type="interaction">
    <interactant intactId="EBI-170000">
        <id>Q9NK57</id>
    </interactant>
    <interactant intactId="EBI-170000">
        <id>Q9NK57</id>
        <label>anon-35F/36A</label>
    </interactant>
    <organismsDiffer>false</organismsDiffer>
    <experiments>3</experiments>
</comment>
<comment type="similarity">
    <text evidence="1">Belongs to the GTP cyclohydrolase I type 2/NIF3 family.</text>
</comment>
<comment type="sequence caution" evidence="1">
    <conflict type="erroneous initiation">
        <sequence resource="EMBL-CDS" id="AAL39701"/>
    </conflict>
</comment>
<gene>
    <name type="primary">anon-35F/36A</name>
    <name type="ORF">CG4278</name>
</gene>
<feature type="chain" id="PRO_0000147352" description="NIF3-like protein 1">
    <location>
        <begin position="1"/>
        <end position="292"/>
    </location>
</feature>
<dbReference type="EMBL" id="AE014134">
    <property type="protein sequence ID" value="AAF53525.2"/>
    <property type="molecule type" value="Genomic_DNA"/>
</dbReference>
<dbReference type="EMBL" id="AY069556">
    <property type="protein sequence ID" value="AAL39701.2"/>
    <property type="status" value="ALT_INIT"/>
    <property type="molecule type" value="mRNA"/>
</dbReference>
<dbReference type="RefSeq" id="NP_609790.1">
    <property type="nucleotide sequence ID" value="NM_135946.3"/>
</dbReference>
<dbReference type="SMR" id="Q9NK57"/>
<dbReference type="BioGRID" id="60981">
    <property type="interactions" value="4"/>
</dbReference>
<dbReference type="DIP" id="DIP-23705N"/>
<dbReference type="FunCoup" id="Q9NK57">
    <property type="interactions" value="2090"/>
</dbReference>
<dbReference type="IntAct" id="Q9NK57">
    <property type="interactions" value="7"/>
</dbReference>
<dbReference type="STRING" id="7227.FBpp0080392"/>
<dbReference type="PaxDb" id="7227-FBpp0080392"/>
<dbReference type="DNASU" id="34970"/>
<dbReference type="EnsemblMetazoa" id="FBtr0080834">
    <property type="protein sequence ID" value="FBpp0080392"/>
    <property type="gene ID" value="FBgn0014092"/>
</dbReference>
<dbReference type="GeneID" id="34970"/>
<dbReference type="KEGG" id="dme:Dmel_CG4278"/>
<dbReference type="UCSC" id="CG4278-RA">
    <property type="organism name" value="d. melanogaster"/>
</dbReference>
<dbReference type="AGR" id="FB:FBgn0014092"/>
<dbReference type="FlyBase" id="FBgn0014092">
    <property type="gene designation" value="CG4278"/>
</dbReference>
<dbReference type="VEuPathDB" id="VectorBase:FBgn0014092"/>
<dbReference type="eggNOG" id="KOG4131">
    <property type="taxonomic scope" value="Eukaryota"/>
</dbReference>
<dbReference type="GeneTree" id="ENSGT00390000003590"/>
<dbReference type="HOGENOM" id="CLU_037423_0_1_1"/>
<dbReference type="InParanoid" id="Q9NK57"/>
<dbReference type="OMA" id="NFDKTHL"/>
<dbReference type="OrthoDB" id="3345469at2759"/>
<dbReference type="PhylomeDB" id="Q9NK57"/>
<dbReference type="BioGRID-ORCS" id="34970">
    <property type="hits" value="1 hit in 1 CRISPR screen"/>
</dbReference>
<dbReference type="GenomeRNAi" id="34970"/>
<dbReference type="PRO" id="PR:Q9NK57"/>
<dbReference type="Proteomes" id="UP000000803">
    <property type="component" value="Chromosome 2L"/>
</dbReference>
<dbReference type="Bgee" id="FBgn0014092">
    <property type="expression patterns" value="Expressed in eye disc (Drosophila) and 74 other cell types or tissues"/>
</dbReference>
<dbReference type="GO" id="GO:0005737">
    <property type="term" value="C:cytoplasm"/>
    <property type="evidence" value="ECO:0000318"/>
    <property type="project" value="GO_Central"/>
</dbReference>
<dbReference type="GO" id="GO:0005739">
    <property type="term" value="C:mitochondrion"/>
    <property type="evidence" value="ECO:0000318"/>
    <property type="project" value="GO_Central"/>
</dbReference>
<dbReference type="GO" id="GO:0042802">
    <property type="term" value="F:identical protein binding"/>
    <property type="evidence" value="ECO:0000353"/>
    <property type="project" value="IntAct"/>
</dbReference>
<dbReference type="FunFam" id="3.40.1390.30:FF:000001">
    <property type="entry name" value="GTP cyclohydrolase 1 type 2"/>
    <property type="match status" value="1"/>
</dbReference>
<dbReference type="Gene3D" id="3.40.1390.30">
    <property type="entry name" value="NIF3 (NGG1p interacting factor 3)-like"/>
    <property type="match status" value="1"/>
</dbReference>
<dbReference type="InterPro" id="IPR002678">
    <property type="entry name" value="DUF34/NIF3"/>
</dbReference>
<dbReference type="InterPro" id="IPR036069">
    <property type="entry name" value="DUF34/NIF3_sf"/>
</dbReference>
<dbReference type="NCBIfam" id="TIGR00486">
    <property type="entry name" value="YbgI_SA1388"/>
    <property type="match status" value="1"/>
</dbReference>
<dbReference type="PANTHER" id="PTHR13799">
    <property type="entry name" value="NGG1 INTERACTING FACTOR 3"/>
    <property type="match status" value="1"/>
</dbReference>
<dbReference type="PANTHER" id="PTHR13799:SF13">
    <property type="entry name" value="NIF3-LIKE PROTEIN 1"/>
    <property type="match status" value="1"/>
</dbReference>
<dbReference type="Pfam" id="PF01784">
    <property type="entry name" value="DUF34_NIF3"/>
    <property type="match status" value="1"/>
</dbReference>
<dbReference type="SUPFAM" id="SSF102705">
    <property type="entry name" value="NIF3 (NGG1p interacting factor 3)-like"/>
    <property type="match status" value="1"/>
</dbReference>
<reference key="1">
    <citation type="journal article" date="1999" name="Genetics">
        <title>An exploration of the sequence of a 2.9-Mb region of the genome of Drosophila melanogaster: the Adh region.</title>
        <authorList>
            <person name="Ashburner M."/>
            <person name="Misra S."/>
            <person name="Roote J."/>
            <person name="Lewis S.E."/>
            <person name="Blazej R.G."/>
            <person name="Davis T."/>
            <person name="Doyle C."/>
            <person name="Galle R.F."/>
            <person name="George R.A."/>
            <person name="Harris N.L."/>
            <person name="Hartzell G."/>
            <person name="Harvey D.A."/>
            <person name="Hong L."/>
            <person name="Houston K.A."/>
            <person name="Hoskins R.A."/>
            <person name="Johnson G."/>
            <person name="Martin C."/>
            <person name="Moshrefi A.R."/>
            <person name="Palazzolo M."/>
            <person name="Reese M.G."/>
            <person name="Spradling A.C."/>
            <person name="Tsang G."/>
            <person name="Wan K.H."/>
            <person name="Whitelaw K."/>
            <person name="Celniker S.E."/>
            <person name="Rubin G.M."/>
        </authorList>
    </citation>
    <scope>NUCLEOTIDE SEQUENCE [LARGE SCALE GENOMIC DNA]</scope>
    <source>
        <strain>Berkeley</strain>
    </source>
</reference>
<reference key="2">
    <citation type="journal article" date="2000" name="Science">
        <title>The genome sequence of Drosophila melanogaster.</title>
        <authorList>
            <person name="Adams M.D."/>
            <person name="Celniker S.E."/>
            <person name="Holt R.A."/>
            <person name="Evans C.A."/>
            <person name="Gocayne J.D."/>
            <person name="Amanatides P.G."/>
            <person name="Scherer S.E."/>
            <person name="Li P.W."/>
            <person name="Hoskins R.A."/>
            <person name="Galle R.F."/>
            <person name="George R.A."/>
            <person name="Lewis S.E."/>
            <person name="Richards S."/>
            <person name="Ashburner M."/>
            <person name="Henderson S.N."/>
            <person name="Sutton G.G."/>
            <person name="Wortman J.R."/>
            <person name="Yandell M.D."/>
            <person name="Zhang Q."/>
            <person name="Chen L.X."/>
            <person name="Brandon R.C."/>
            <person name="Rogers Y.-H.C."/>
            <person name="Blazej R.G."/>
            <person name="Champe M."/>
            <person name="Pfeiffer B.D."/>
            <person name="Wan K.H."/>
            <person name="Doyle C."/>
            <person name="Baxter E.G."/>
            <person name="Helt G."/>
            <person name="Nelson C.R."/>
            <person name="Miklos G.L.G."/>
            <person name="Abril J.F."/>
            <person name="Agbayani A."/>
            <person name="An H.-J."/>
            <person name="Andrews-Pfannkoch C."/>
            <person name="Baldwin D."/>
            <person name="Ballew R.M."/>
            <person name="Basu A."/>
            <person name="Baxendale J."/>
            <person name="Bayraktaroglu L."/>
            <person name="Beasley E.M."/>
            <person name="Beeson K.Y."/>
            <person name="Benos P.V."/>
            <person name="Berman B.P."/>
            <person name="Bhandari D."/>
            <person name="Bolshakov S."/>
            <person name="Borkova D."/>
            <person name="Botchan M.R."/>
            <person name="Bouck J."/>
            <person name="Brokstein P."/>
            <person name="Brottier P."/>
            <person name="Burtis K.C."/>
            <person name="Busam D.A."/>
            <person name="Butler H."/>
            <person name="Cadieu E."/>
            <person name="Center A."/>
            <person name="Chandra I."/>
            <person name="Cherry J.M."/>
            <person name="Cawley S."/>
            <person name="Dahlke C."/>
            <person name="Davenport L.B."/>
            <person name="Davies P."/>
            <person name="de Pablos B."/>
            <person name="Delcher A."/>
            <person name="Deng Z."/>
            <person name="Mays A.D."/>
            <person name="Dew I."/>
            <person name="Dietz S.M."/>
            <person name="Dodson K."/>
            <person name="Doup L.E."/>
            <person name="Downes M."/>
            <person name="Dugan-Rocha S."/>
            <person name="Dunkov B.C."/>
            <person name="Dunn P."/>
            <person name="Durbin K.J."/>
            <person name="Evangelista C.C."/>
            <person name="Ferraz C."/>
            <person name="Ferriera S."/>
            <person name="Fleischmann W."/>
            <person name="Fosler C."/>
            <person name="Gabrielian A.E."/>
            <person name="Garg N.S."/>
            <person name="Gelbart W.M."/>
            <person name="Glasser K."/>
            <person name="Glodek A."/>
            <person name="Gong F."/>
            <person name="Gorrell J.H."/>
            <person name="Gu Z."/>
            <person name="Guan P."/>
            <person name="Harris M."/>
            <person name="Harris N.L."/>
            <person name="Harvey D.A."/>
            <person name="Heiman T.J."/>
            <person name="Hernandez J.R."/>
            <person name="Houck J."/>
            <person name="Hostin D."/>
            <person name="Houston K.A."/>
            <person name="Howland T.J."/>
            <person name="Wei M.-H."/>
            <person name="Ibegwam C."/>
            <person name="Jalali M."/>
            <person name="Kalush F."/>
            <person name="Karpen G.H."/>
            <person name="Ke Z."/>
            <person name="Kennison J.A."/>
            <person name="Ketchum K.A."/>
            <person name="Kimmel B.E."/>
            <person name="Kodira C.D."/>
            <person name="Kraft C.L."/>
            <person name="Kravitz S."/>
            <person name="Kulp D."/>
            <person name="Lai Z."/>
            <person name="Lasko P."/>
            <person name="Lei Y."/>
            <person name="Levitsky A.A."/>
            <person name="Li J.H."/>
            <person name="Li Z."/>
            <person name="Liang Y."/>
            <person name="Lin X."/>
            <person name="Liu X."/>
            <person name="Mattei B."/>
            <person name="McIntosh T.C."/>
            <person name="McLeod M.P."/>
            <person name="McPherson D."/>
            <person name="Merkulov G."/>
            <person name="Milshina N.V."/>
            <person name="Mobarry C."/>
            <person name="Morris J."/>
            <person name="Moshrefi A."/>
            <person name="Mount S.M."/>
            <person name="Moy M."/>
            <person name="Murphy B."/>
            <person name="Murphy L."/>
            <person name="Muzny D.M."/>
            <person name="Nelson D.L."/>
            <person name="Nelson D.R."/>
            <person name="Nelson K.A."/>
            <person name="Nixon K."/>
            <person name="Nusskern D.R."/>
            <person name="Pacleb J.M."/>
            <person name="Palazzolo M."/>
            <person name="Pittman G.S."/>
            <person name="Pan S."/>
            <person name="Pollard J."/>
            <person name="Puri V."/>
            <person name="Reese M.G."/>
            <person name="Reinert K."/>
            <person name="Remington K."/>
            <person name="Saunders R.D.C."/>
            <person name="Scheeler F."/>
            <person name="Shen H."/>
            <person name="Shue B.C."/>
            <person name="Siden-Kiamos I."/>
            <person name="Simpson M."/>
            <person name="Skupski M.P."/>
            <person name="Smith T.J."/>
            <person name="Spier E."/>
            <person name="Spradling A.C."/>
            <person name="Stapleton M."/>
            <person name="Strong R."/>
            <person name="Sun E."/>
            <person name="Svirskas R."/>
            <person name="Tector C."/>
            <person name="Turner R."/>
            <person name="Venter E."/>
            <person name="Wang A.H."/>
            <person name="Wang X."/>
            <person name="Wang Z.-Y."/>
            <person name="Wassarman D.A."/>
            <person name="Weinstock G.M."/>
            <person name="Weissenbach J."/>
            <person name="Williams S.M."/>
            <person name="Woodage T."/>
            <person name="Worley K.C."/>
            <person name="Wu D."/>
            <person name="Yang S."/>
            <person name="Yao Q.A."/>
            <person name="Ye J."/>
            <person name="Yeh R.-F."/>
            <person name="Zaveri J.S."/>
            <person name="Zhan M."/>
            <person name="Zhang G."/>
            <person name="Zhao Q."/>
            <person name="Zheng L."/>
            <person name="Zheng X.H."/>
            <person name="Zhong F.N."/>
            <person name="Zhong W."/>
            <person name="Zhou X."/>
            <person name="Zhu S.C."/>
            <person name="Zhu X."/>
            <person name="Smith H.O."/>
            <person name="Gibbs R.A."/>
            <person name="Myers E.W."/>
            <person name="Rubin G.M."/>
            <person name="Venter J.C."/>
        </authorList>
    </citation>
    <scope>NUCLEOTIDE SEQUENCE [LARGE SCALE GENOMIC DNA]</scope>
    <source>
        <strain>Berkeley</strain>
    </source>
</reference>
<reference key="3">
    <citation type="journal article" date="2002" name="Genome Biol.">
        <title>Annotation of the Drosophila melanogaster euchromatic genome: a systematic review.</title>
        <authorList>
            <person name="Misra S."/>
            <person name="Crosby M.A."/>
            <person name="Mungall C.J."/>
            <person name="Matthews B.B."/>
            <person name="Campbell K.S."/>
            <person name="Hradecky P."/>
            <person name="Huang Y."/>
            <person name="Kaminker J.S."/>
            <person name="Millburn G.H."/>
            <person name="Prochnik S.E."/>
            <person name="Smith C.D."/>
            <person name="Tupy J.L."/>
            <person name="Whitfield E.J."/>
            <person name="Bayraktaroglu L."/>
            <person name="Berman B.P."/>
            <person name="Bettencourt B.R."/>
            <person name="Celniker S.E."/>
            <person name="de Grey A.D.N.J."/>
            <person name="Drysdale R.A."/>
            <person name="Harris N.L."/>
            <person name="Richter J."/>
            <person name="Russo S."/>
            <person name="Schroeder A.J."/>
            <person name="Shu S.Q."/>
            <person name="Stapleton M."/>
            <person name="Yamada C."/>
            <person name="Ashburner M."/>
            <person name="Gelbart W.M."/>
            <person name="Rubin G.M."/>
            <person name="Lewis S.E."/>
        </authorList>
    </citation>
    <scope>GENOME REANNOTATION</scope>
    <source>
        <strain>Berkeley</strain>
    </source>
</reference>
<reference key="4">
    <citation type="journal article" date="2002" name="Genome Biol.">
        <title>A Drosophila full-length cDNA resource.</title>
        <authorList>
            <person name="Stapleton M."/>
            <person name="Carlson J.W."/>
            <person name="Brokstein P."/>
            <person name="Yu C."/>
            <person name="Champe M."/>
            <person name="George R.A."/>
            <person name="Guarin H."/>
            <person name="Kronmiller B."/>
            <person name="Pacleb J.M."/>
            <person name="Park S."/>
            <person name="Wan K.H."/>
            <person name="Rubin G.M."/>
            <person name="Celniker S.E."/>
        </authorList>
    </citation>
    <scope>NUCLEOTIDE SEQUENCE [LARGE SCALE MRNA]</scope>
    <source>
        <strain>Berkeley</strain>
        <tissue>Embryo</tissue>
    </source>
</reference>
<proteinExistence type="evidence at protein level"/>
<name>NIF3L_DROME</name>
<protein>
    <recommendedName>
        <fullName evidence="1">NIF3-like protein 1</fullName>
    </recommendedName>
    <alternativeName>
        <fullName>Protein anon-35F/36A</fullName>
    </alternativeName>
</protein>
<keyword id="KW-1185">Reference proteome</keyword>
<accession>Q9NK57</accession>
<accession>Q9VJL4</accession>
<sequence>MLRRMNTFSGQKLAAVVKELENFAPTSWAEKWDNVGLLIEPHREKQIKKILLTNDLTEPVVKEALEKEAELIISYHPPIFKPLTRITQSHWKERVVAACLANDIALYSPHTAWDKKSGGVNDWLSKAVNIISIRPLEPELGAPPGTGSGRYIETKMELSQVVESLQKRIRNSVHVALAVGHTPKTLIQSVGICAGSGASLLKGIQADLIITGEMSHHEVLEFTHNNTTVLLCNHSNSERGFLHEFCPILAKSLNEECLVFVSEVDKDPLVTVASDINKELSAFVDVYKSTSK</sequence>